<evidence type="ECO:0000250" key="1"/>
<evidence type="ECO:0000250" key="2">
    <source>
        <dbReference type="UniProtKB" id="P14618"/>
    </source>
</evidence>
<evidence type="ECO:0000255" key="3"/>
<evidence type="ECO:0000269" key="4">
    <source>
    </source>
</evidence>
<evidence type="ECO:0000305" key="5"/>
<protein>
    <recommendedName>
        <fullName>Pyruvate kinase</fullName>
        <shortName>PK</shortName>
        <ecNumber>2.7.1.40</ecNumber>
    </recommendedName>
</protein>
<keyword id="KW-0067">ATP-binding</keyword>
<keyword id="KW-0963">Cytoplasm</keyword>
<keyword id="KW-0903">Direct protein sequencing</keyword>
<keyword id="KW-0324">Glycolysis</keyword>
<keyword id="KW-0418">Kinase</keyword>
<keyword id="KW-0460">Magnesium</keyword>
<keyword id="KW-0479">Metal-binding</keyword>
<keyword id="KW-0547">Nucleotide-binding</keyword>
<keyword id="KW-0670">Pyruvate</keyword>
<keyword id="KW-1185">Reference proteome</keyword>
<keyword id="KW-0808">Transferase</keyword>
<proteinExistence type="evidence at protein level"/>
<sequence>MSHSSLSWLSNFNVETVPSKYLRRSSIIGTIGPKTNNVDVLVKLRKAGLNVVRMNFSHGSYEYHQSVIDNARKSEEVYKGRPLAIALDTKGPEIRTGTTIGDKDYPIPPNHEMIFTTDDAYKTKCDDKVMYIDYKNITKVIAPGKIIYVDDGVLSFEVISVDDEQTLKVRSLNAGKISSHKGVNLPGTDVDLPALSEKDIADIKFGVKNKVHMIFASFIRTANDVLEIRKVLGEEGKDIQIISKIENQQGVNNFDEILEVTDGVMVARGDLGIEIPAPQVFVVQKQLIAKCNLAAKPVICATQMLESMTYNPRPTRAEVSDVGNAILDGADCVMLSGETAKGNYPVEAVSMMHNTCLTAEKAIAYPQLFNELRSLAKKPTATTETCAVAAVSAAYEQDAKAIVVLSTSGLSARLVSKYKPDVPILMVTRNERAAKFSHLYRGVYPFIYDKPSIENWQEDVENRLRWAVSEAVELGIISKGDSIVTVQGWTRGSGHSNTVRIVQA</sequence>
<reference key="1">
    <citation type="journal article" date="2004" name="Proc. Natl. Acad. Sci. U.S.A.">
        <title>The diploid genome sequence of Candida albicans.</title>
        <authorList>
            <person name="Jones T."/>
            <person name="Federspiel N.A."/>
            <person name="Chibana H."/>
            <person name="Dungan J."/>
            <person name="Kalman S."/>
            <person name="Magee B.B."/>
            <person name="Newport G."/>
            <person name="Thorstenson Y.R."/>
            <person name="Agabian N."/>
            <person name="Magee P.T."/>
            <person name="Davis R.W."/>
            <person name="Scherer S."/>
        </authorList>
    </citation>
    <scope>NUCLEOTIDE SEQUENCE [LARGE SCALE GENOMIC DNA]</scope>
    <source>
        <strain>SC5314 / ATCC MYA-2876</strain>
    </source>
</reference>
<reference key="2">
    <citation type="journal article" date="2007" name="Genome Biol.">
        <title>Assembly of the Candida albicans genome into sixteen supercontigs aligned on the eight chromosomes.</title>
        <authorList>
            <person name="van het Hoog M."/>
            <person name="Rast T.J."/>
            <person name="Martchenko M."/>
            <person name="Grindle S."/>
            <person name="Dignard D."/>
            <person name="Hogues H."/>
            <person name="Cuomo C."/>
            <person name="Berriman M."/>
            <person name="Scherer S."/>
            <person name="Magee B.B."/>
            <person name="Whiteway M."/>
            <person name="Chibana H."/>
            <person name="Nantel A."/>
            <person name="Magee P.T."/>
        </authorList>
    </citation>
    <scope>GENOME REANNOTATION</scope>
    <source>
        <strain>SC5314 / ATCC MYA-2876</strain>
    </source>
</reference>
<reference key="3">
    <citation type="journal article" date="2013" name="Genome Biol.">
        <title>Assembly of a phased diploid Candida albicans genome facilitates allele-specific measurements and provides a simple model for repeat and indel structure.</title>
        <authorList>
            <person name="Muzzey D."/>
            <person name="Schwartz K."/>
            <person name="Weissman J.S."/>
            <person name="Sherlock G."/>
        </authorList>
    </citation>
    <scope>NUCLEOTIDE SEQUENCE [LARGE SCALE GENOMIC DNA]</scope>
    <scope>GENOME REANNOTATION</scope>
    <source>
        <strain>SC5314 / ATCC MYA-2876</strain>
    </source>
</reference>
<reference key="4">
    <citation type="journal article" date="1993" name="Infect. Immun.">
        <title>Glycolytic enzymes of Candida albicans are nonubiquitous immunogens during candidiasis.</title>
        <authorList>
            <person name="Swoboda R.K."/>
            <person name="Bertram G."/>
            <person name="Hollander H."/>
            <person name="Greenspan D."/>
            <person name="Greenspan J.S."/>
            <person name="Gow N.A."/>
            <person name="Gooday G.W."/>
            <person name="Brown A.J."/>
        </authorList>
    </citation>
    <scope>NUCLEOTIDE SEQUENCE [MRNA] OF 1-181</scope>
</reference>
<reference key="5">
    <citation type="journal article" date="2000" name="Electrophoresis">
        <title>Cross-species identification of novel Candida albicans immunogenic proteins by combination of two-dimensional polyacrylamide gel electrophoresis and mass spectrometry.</title>
        <authorList>
            <person name="Pardo M."/>
            <person name="Ward M."/>
            <person name="Pitarch A."/>
            <person name="Sanchez M."/>
            <person name="Nombela C."/>
            <person name="Blackstock W."/>
            <person name="Gil C."/>
        </authorList>
    </citation>
    <scope>PROTEIN SEQUENCE OF 221-229 AND 404-409</scope>
    <scope>IDENTIFICATION BY MASS SPECTROMETRY</scope>
    <source>
        <strain>SC5314 / ATCC MYA-2876</strain>
    </source>
</reference>
<reference key="6">
    <citation type="journal article" date="2004" name="Proteomics">
        <title>Proteomics-based identification of novel Candida albicans antigens for diagnosis of systemic candidiasis in patients with underlying hematological malignancies.</title>
        <authorList>
            <person name="Pitarch A."/>
            <person name="Abian J."/>
            <person name="Carrascal M."/>
            <person name="Sanchez M."/>
            <person name="Nombela C."/>
            <person name="Gil C."/>
        </authorList>
    </citation>
    <scope>PROTEIN SEQUENCE OF 404-409</scope>
    <scope>SUBCELLULAR LOCATION</scope>
    <scope>ANTIGENICITY</scope>
    <source>
        <strain>SC5314 / ATCC MYA-2876</strain>
        <tissue>Protoplast</tissue>
    </source>
</reference>
<dbReference type="EC" id="2.7.1.40"/>
<dbReference type="EMBL" id="CP017624">
    <property type="protein sequence ID" value="AOW27559.1"/>
    <property type="molecule type" value="Genomic_DNA"/>
</dbReference>
<dbReference type="EMBL" id="S65775">
    <property type="status" value="NOT_ANNOTATED_CDS"/>
    <property type="molecule type" value="mRNA"/>
</dbReference>
<dbReference type="RefSeq" id="XP_714934.1">
    <property type="nucleotide sequence ID" value="XM_709841.1"/>
</dbReference>
<dbReference type="SMR" id="P46614"/>
<dbReference type="BioGRID" id="1226503">
    <property type="interactions" value="6"/>
</dbReference>
<dbReference type="FunCoup" id="P46614">
    <property type="interactions" value="967"/>
</dbReference>
<dbReference type="STRING" id="237561.P46614"/>
<dbReference type="EnsemblFungi" id="C2_05460W_A-T">
    <property type="protein sequence ID" value="C2_05460W_A-T-p1"/>
    <property type="gene ID" value="C2_05460W_A"/>
</dbReference>
<dbReference type="GeneID" id="3643438"/>
<dbReference type="KEGG" id="cal:CAALFM_C205460WA"/>
<dbReference type="CGD" id="CAL0000192883">
    <property type="gene designation" value="CDC19"/>
</dbReference>
<dbReference type="VEuPathDB" id="FungiDB:C2_05460W_A"/>
<dbReference type="eggNOG" id="KOG2323">
    <property type="taxonomic scope" value="Eukaryota"/>
</dbReference>
<dbReference type="HOGENOM" id="CLU_015439_0_1_1"/>
<dbReference type="InParanoid" id="P46614"/>
<dbReference type="OMA" id="RVHHIGE"/>
<dbReference type="OrthoDB" id="108365at2759"/>
<dbReference type="UniPathway" id="UPA00109">
    <property type="reaction ID" value="UER00188"/>
</dbReference>
<dbReference type="PRO" id="PR:P46614"/>
<dbReference type="Proteomes" id="UP000000559">
    <property type="component" value="Chromosome 2"/>
</dbReference>
<dbReference type="GO" id="GO:0009986">
    <property type="term" value="C:cell surface"/>
    <property type="evidence" value="ECO:0000314"/>
    <property type="project" value="CGD"/>
</dbReference>
<dbReference type="GO" id="GO:0005737">
    <property type="term" value="C:cytoplasm"/>
    <property type="evidence" value="ECO:0000318"/>
    <property type="project" value="GO_Central"/>
</dbReference>
<dbReference type="GO" id="GO:0030446">
    <property type="term" value="C:hyphal cell wall"/>
    <property type="evidence" value="ECO:0000314"/>
    <property type="project" value="CGD"/>
</dbReference>
<dbReference type="GO" id="GO:0005886">
    <property type="term" value="C:plasma membrane"/>
    <property type="evidence" value="ECO:0000314"/>
    <property type="project" value="CGD"/>
</dbReference>
<dbReference type="GO" id="GO:0030445">
    <property type="term" value="C:yeast-form cell wall"/>
    <property type="evidence" value="ECO:0000314"/>
    <property type="project" value="CGD"/>
</dbReference>
<dbReference type="GO" id="GO:0005524">
    <property type="term" value="F:ATP binding"/>
    <property type="evidence" value="ECO:0007669"/>
    <property type="project" value="UniProtKB-KW"/>
</dbReference>
<dbReference type="GO" id="GO:0016301">
    <property type="term" value="F:kinase activity"/>
    <property type="evidence" value="ECO:0007669"/>
    <property type="project" value="UniProtKB-KW"/>
</dbReference>
<dbReference type="GO" id="GO:0000287">
    <property type="term" value="F:magnesium ion binding"/>
    <property type="evidence" value="ECO:0007669"/>
    <property type="project" value="InterPro"/>
</dbReference>
<dbReference type="GO" id="GO:0030955">
    <property type="term" value="F:potassium ion binding"/>
    <property type="evidence" value="ECO:0007669"/>
    <property type="project" value="InterPro"/>
</dbReference>
<dbReference type="GO" id="GO:0004743">
    <property type="term" value="F:pyruvate kinase activity"/>
    <property type="evidence" value="ECO:0000250"/>
    <property type="project" value="CGD"/>
</dbReference>
<dbReference type="GO" id="GO:0009267">
    <property type="term" value="P:cellular response to starvation"/>
    <property type="evidence" value="ECO:0000315"/>
    <property type="project" value="CGD"/>
</dbReference>
<dbReference type="GO" id="GO:0030447">
    <property type="term" value="P:filamentous growth"/>
    <property type="evidence" value="ECO:0000315"/>
    <property type="project" value="CGD"/>
</dbReference>
<dbReference type="GO" id="GO:0036180">
    <property type="term" value="P:filamentous growth of a population of unicellular organisms in response to biotic stimulus"/>
    <property type="evidence" value="ECO:0000315"/>
    <property type="project" value="CGD"/>
</dbReference>
<dbReference type="GO" id="GO:0036170">
    <property type="term" value="P:filamentous growth of a population of unicellular organisms in response to starvation"/>
    <property type="evidence" value="ECO:0000315"/>
    <property type="project" value="CGD"/>
</dbReference>
<dbReference type="GO" id="GO:0006096">
    <property type="term" value="P:glycolytic process"/>
    <property type="evidence" value="ECO:0000250"/>
    <property type="project" value="CGD"/>
</dbReference>
<dbReference type="GO" id="GO:0052553">
    <property type="term" value="P:symbiont-mediated perturbation of host immune response"/>
    <property type="evidence" value="ECO:0000314"/>
    <property type="project" value="CGD"/>
</dbReference>
<dbReference type="CDD" id="cd00288">
    <property type="entry name" value="Pyruvate_Kinase"/>
    <property type="match status" value="1"/>
</dbReference>
<dbReference type="FunFam" id="2.40.33.10:FF:000001">
    <property type="entry name" value="Pyruvate kinase"/>
    <property type="match status" value="1"/>
</dbReference>
<dbReference type="FunFam" id="3.20.20.60:FF:000001">
    <property type="entry name" value="Pyruvate kinase"/>
    <property type="match status" value="1"/>
</dbReference>
<dbReference type="FunFam" id="3.40.1380.20:FF:000001">
    <property type="entry name" value="Pyruvate kinase"/>
    <property type="match status" value="1"/>
</dbReference>
<dbReference type="Gene3D" id="3.20.20.60">
    <property type="entry name" value="Phosphoenolpyruvate-binding domains"/>
    <property type="match status" value="1"/>
</dbReference>
<dbReference type="Gene3D" id="2.40.33.10">
    <property type="entry name" value="PK beta-barrel domain-like"/>
    <property type="match status" value="1"/>
</dbReference>
<dbReference type="Gene3D" id="3.40.1380.20">
    <property type="entry name" value="Pyruvate kinase, C-terminal domain"/>
    <property type="match status" value="1"/>
</dbReference>
<dbReference type="InterPro" id="IPR001697">
    <property type="entry name" value="Pyr_Knase"/>
</dbReference>
<dbReference type="InterPro" id="IPR015813">
    <property type="entry name" value="Pyrv/PenolPyrv_kinase-like_dom"/>
</dbReference>
<dbReference type="InterPro" id="IPR040442">
    <property type="entry name" value="Pyrv_kinase-like_dom_sf"/>
</dbReference>
<dbReference type="InterPro" id="IPR011037">
    <property type="entry name" value="Pyrv_Knase-like_insert_dom_sf"/>
</dbReference>
<dbReference type="InterPro" id="IPR018209">
    <property type="entry name" value="Pyrv_Knase_AS"/>
</dbReference>
<dbReference type="InterPro" id="IPR015793">
    <property type="entry name" value="Pyrv_Knase_brl"/>
</dbReference>
<dbReference type="InterPro" id="IPR015795">
    <property type="entry name" value="Pyrv_Knase_C"/>
</dbReference>
<dbReference type="InterPro" id="IPR036918">
    <property type="entry name" value="Pyrv_Knase_C_sf"/>
</dbReference>
<dbReference type="InterPro" id="IPR015806">
    <property type="entry name" value="Pyrv_Knase_insert_dom_sf"/>
</dbReference>
<dbReference type="NCBIfam" id="NF004491">
    <property type="entry name" value="PRK05826.1"/>
    <property type="match status" value="1"/>
</dbReference>
<dbReference type="NCBIfam" id="NF004978">
    <property type="entry name" value="PRK06354.1"/>
    <property type="match status" value="1"/>
</dbReference>
<dbReference type="NCBIfam" id="TIGR01064">
    <property type="entry name" value="pyruv_kin"/>
    <property type="match status" value="1"/>
</dbReference>
<dbReference type="PANTHER" id="PTHR11817">
    <property type="entry name" value="PYRUVATE KINASE"/>
    <property type="match status" value="1"/>
</dbReference>
<dbReference type="Pfam" id="PF00224">
    <property type="entry name" value="PK"/>
    <property type="match status" value="1"/>
</dbReference>
<dbReference type="Pfam" id="PF02887">
    <property type="entry name" value="PK_C"/>
    <property type="match status" value="1"/>
</dbReference>
<dbReference type="PRINTS" id="PR01050">
    <property type="entry name" value="PYRUVTKNASE"/>
</dbReference>
<dbReference type="SUPFAM" id="SSF51621">
    <property type="entry name" value="Phosphoenolpyruvate/pyruvate domain"/>
    <property type="match status" value="1"/>
</dbReference>
<dbReference type="SUPFAM" id="SSF50800">
    <property type="entry name" value="PK beta-barrel domain-like"/>
    <property type="match status" value="1"/>
</dbReference>
<dbReference type="SUPFAM" id="SSF52935">
    <property type="entry name" value="PK C-terminal domain-like"/>
    <property type="match status" value="1"/>
</dbReference>
<dbReference type="PROSITE" id="PS00110">
    <property type="entry name" value="PYRUVATE_KINASE"/>
    <property type="match status" value="1"/>
</dbReference>
<accession>P46614</accession>
<accession>A0A1D8PHF3</accession>
<accession>Q59ZE4</accession>
<gene>
    <name type="primary">CDC19</name>
    <name type="synonym">PYK1</name>
    <name type="ordered locus">CAALFM_C205460WA</name>
    <name type="ORF">CaO19.11059</name>
    <name type="ORF">CaO19.3575</name>
</gene>
<feature type="chain" id="PRO_0000112109" description="Pyruvate kinase">
    <location>
        <begin position="1"/>
        <end position="504"/>
    </location>
</feature>
<feature type="binding site" evidence="1">
    <location>
        <position position="53"/>
    </location>
    <ligand>
        <name>substrate</name>
    </ligand>
</feature>
<feature type="binding site" evidence="2">
    <location>
        <begin position="55"/>
        <end position="58"/>
    </location>
    <ligand>
        <name>ATP</name>
        <dbReference type="ChEBI" id="CHEBI:30616"/>
    </ligand>
</feature>
<feature type="binding site" evidence="1">
    <location>
        <position position="55"/>
    </location>
    <ligand>
        <name>K(+)</name>
        <dbReference type="ChEBI" id="CHEBI:29103"/>
    </ligand>
</feature>
<feature type="binding site" evidence="1">
    <location>
        <position position="57"/>
    </location>
    <ligand>
        <name>K(+)</name>
        <dbReference type="ChEBI" id="CHEBI:29103"/>
    </ligand>
</feature>
<feature type="binding site" evidence="1">
    <location>
        <position position="88"/>
    </location>
    <ligand>
        <name>K(+)</name>
        <dbReference type="ChEBI" id="CHEBI:29103"/>
    </ligand>
</feature>
<feature type="binding site" evidence="1">
    <location>
        <position position="89"/>
    </location>
    <ligand>
        <name>K(+)</name>
        <dbReference type="ChEBI" id="CHEBI:29103"/>
    </ligand>
</feature>
<feature type="binding site" evidence="2">
    <location>
        <position position="95"/>
    </location>
    <ligand>
        <name>ATP</name>
        <dbReference type="ChEBI" id="CHEBI:30616"/>
    </ligand>
</feature>
<feature type="binding site" evidence="2">
    <location>
        <position position="181"/>
    </location>
    <ligand>
        <name>ATP</name>
        <dbReference type="ChEBI" id="CHEBI:30616"/>
    </ligand>
</feature>
<feature type="binding site" evidence="3">
    <location>
        <position position="246"/>
    </location>
    <ligand>
        <name>Mg(2+)</name>
        <dbReference type="ChEBI" id="CHEBI:18420"/>
    </ligand>
</feature>
<feature type="binding site" evidence="1">
    <location>
        <position position="269"/>
    </location>
    <ligand>
        <name>substrate</name>
    </ligand>
</feature>
<feature type="binding site" evidence="1">
    <location>
        <position position="270"/>
    </location>
    <ligand>
        <name>Mg(2+)</name>
        <dbReference type="ChEBI" id="CHEBI:18420"/>
    </ligand>
</feature>
<feature type="binding site" evidence="1">
    <location>
        <position position="270"/>
    </location>
    <ligand>
        <name>substrate</name>
    </ligand>
</feature>
<feature type="binding site" evidence="1">
    <location>
        <position position="302"/>
    </location>
    <ligand>
        <name>substrate</name>
    </ligand>
</feature>
<feature type="site" description="Transition state stabilizer" evidence="1">
    <location>
        <position position="244"/>
    </location>
</feature>
<feature type="sequence conflict" description="In Ref. 4; S65775." evidence="5" ref="4">
    <original>I</original>
    <variation>T</variation>
    <location>
        <position position="94"/>
    </location>
</feature>
<feature type="sequence conflict" description="In Ref. 4; S65775." evidence="5" ref="4">
    <original>T</original>
    <variation>H</variation>
    <location>
        <position position="98"/>
    </location>
</feature>
<feature type="sequence conflict" description="In Ref. 4; S65775." evidence="5" ref="4">
    <original>P</original>
    <variation>T</variation>
    <location>
        <position position="106"/>
    </location>
</feature>
<feature type="sequence conflict" description="In Ref. 4; S65775." evidence="5" ref="4">
    <original>Y</original>
    <variation>I</variation>
    <location>
        <position position="131"/>
    </location>
</feature>
<feature type="sequence conflict" description="In Ref. 4; S65775." evidence="5" ref="4">
    <original>E</original>
    <variation>Q</variation>
    <location>
        <position position="164"/>
    </location>
</feature>
<feature type="sequence conflict" description="In Ref. 4; S65775." evidence="5" ref="4">
    <original>K</original>
    <variation>M</variation>
    <location>
        <position position="176"/>
    </location>
</feature>
<name>KPYK_CANAL</name>
<comment type="catalytic activity">
    <reaction>
        <text>pyruvate + ATP = phosphoenolpyruvate + ADP + H(+)</text>
        <dbReference type="Rhea" id="RHEA:18157"/>
        <dbReference type="ChEBI" id="CHEBI:15361"/>
        <dbReference type="ChEBI" id="CHEBI:15378"/>
        <dbReference type="ChEBI" id="CHEBI:30616"/>
        <dbReference type="ChEBI" id="CHEBI:58702"/>
        <dbReference type="ChEBI" id="CHEBI:456216"/>
        <dbReference type="EC" id="2.7.1.40"/>
    </reaction>
</comment>
<comment type="cofactor">
    <cofactor evidence="1">
        <name>Mg(2+)</name>
        <dbReference type="ChEBI" id="CHEBI:18420"/>
    </cofactor>
</comment>
<comment type="cofactor">
    <cofactor evidence="1">
        <name>K(+)</name>
        <dbReference type="ChEBI" id="CHEBI:29103"/>
    </cofactor>
</comment>
<comment type="pathway">
    <text>Carbohydrate degradation; glycolysis; pyruvate from D-glyceraldehyde 3-phosphate: step 5/5.</text>
</comment>
<comment type="subunit">
    <text evidence="1">Homotetramer.</text>
</comment>
<comment type="subcellular location">
    <subcellularLocation>
        <location evidence="4">Cytoplasm</location>
    </subcellularLocation>
</comment>
<comment type="miscellaneous">
    <text>Has antigenic properties.</text>
</comment>
<comment type="similarity">
    <text evidence="5">Belongs to the pyruvate kinase family.</text>
</comment>
<comment type="sequence caution" evidence="5">
    <conflict type="frameshift">
        <sequence resource="EMBL" id="S65775"/>
    </conflict>
</comment>
<organism>
    <name type="scientific">Candida albicans (strain SC5314 / ATCC MYA-2876)</name>
    <name type="common">Yeast</name>
    <dbReference type="NCBI Taxonomy" id="237561"/>
    <lineage>
        <taxon>Eukaryota</taxon>
        <taxon>Fungi</taxon>
        <taxon>Dikarya</taxon>
        <taxon>Ascomycota</taxon>
        <taxon>Saccharomycotina</taxon>
        <taxon>Pichiomycetes</taxon>
        <taxon>Debaryomycetaceae</taxon>
        <taxon>Candida/Lodderomyces clade</taxon>
        <taxon>Candida</taxon>
    </lineage>
</organism>